<name>RS7_METM7</name>
<protein>
    <recommendedName>
        <fullName evidence="1">Small ribosomal subunit protein uS7</fullName>
    </recommendedName>
    <alternativeName>
        <fullName evidence="2">30S ribosomal protein S7</fullName>
    </alternativeName>
</protein>
<reference key="1">
    <citation type="submission" date="2007-06" db="EMBL/GenBank/DDBJ databases">
        <title>Complete sequence of Methanococcus maripaludis C7.</title>
        <authorList>
            <consortium name="US DOE Joint Genome Institute"/>
            <person name="Copeland A."/>
            <person name="Lucas S."/>
            <person name="Lapidus A."/>
            <person name="Barry K."/>
            <person name="Glavina del Rio T."/>
            <person name="Dalin E."/>
            <person name="Tice H."/>
            <person name="Pitluck S."/>
            <person name="Clum A."/>
            <person name="Schmutz J."/>
            <person name="Larimer F."/>
            <person name="Land M."/>
            <person name="Hauser L."/>
            <person name="Kyrpides N."/>
            <person name="Anderson I."/>
            <person name="Sieprawska-Lupa M."/>
            <person name="Whitman W.B."/>
            <person name="Richardson P."/>
        </authorList>
    </citation>
    <scope>NUCLEOTIDE SEQUENCE [LARGE SCALE GENOMIC DNA]</scope>
    <source>
        <strain>C7 / ATCC BAA-1331</strain>
    </source>
</reference>
<keyword id="KW-0687">Ribonucleoprotein</keyword>
<keyword id="KW-0689">Ribosomal protein</keyword>
<keyword id="KW-0694">RNA-binding</keyword>
<keyword id="KW-0699">rRNA-binding</keyword>
<feature type="chain" id="PRO_1000014229" description="Small ribosomal subunit protein uS7">
    <location>
        <begin position="1"/>
        <end position="188"/>
    </location>
</feature>
<organism>
    <name type="scientific">Methanococcus maripaludis (strain C7 / ATCC BAA-1331)</name>
    <dbReference type="NCBI Taxonomy" id="426368"/>
    <lineage>
        <taxon>Archaea</taxon>
        <taxon>Methanobacteriati</taxon>
        <taxon>Methanobacteriota</taxon>
        <taxon>Methanomada group</taxon>
        <taxon>Methanococci</taxon>
        <taxon>Methanococcales</taxon>
        <taxon>Methanococcaceae</taxon>
        <taxon>Methanococcus</taxon>
    </lineage>
</organism>
<sequence>MEIKLFGKWDSETVTVKDPSLKSYVSVAPVLVPHTAGRNSKKSFDKSKMNIVERLANKLMANQENTGKKHETLAIVEEALTIIENRTKENPVQVLVDALENSGPREETTRISYGGIAFLQSVDVSPSRRLDTAFRNIALGASQSAHKNKKTVAQCLADEIIFASKADMQKSFAVRKKEEKERVAQSAR</sequence>
<proteinExistence type="inferred from homology"/>
<dbReference type="EMBL" id="CP000745">
    <property type="protein sequence ID" value="ABR65680.1"/>
    <property type="molecule type" value="Genomic_DNA"/>
</dbReference>
<dbReference type="SMR" id="A6VGV4"/>
<dbReference type="STRING" id="426368.MmarC7_0613"/>
<dbReference type="KEGG" id="mmz:MmarC7_0613"/>
<dbReference type="eggNOG" id="arCOG04254">
    <property type="taxonomic scope" value="Archaea"/>
</dbReference>
<dbReference type="HOGENOM" id="CLU_063975_0_0_2"/>
<dbReference type="OrthoDB" id="45346at2157"/>
<dbReference type="GO" id="GO:0015935">
    <property type="term" value="C:small ribosomal subunit"/>
    <property type="evidence" value="ECO:0007669"/>
    <property type="project" value="InterPro"/>
</dbReference>
<dbReference type="GO" id="GO:0019843">
    <property type="term" value="F:rRNA binding"/>
    <property type="evidence" value="ECO:0007669"/>
    <property type="project" value="UniProtKB-UniRule"/>
</dbReference>
<dbReference type="GO" id="GO:0003735">
    <property type="term" value="F:structural constituent of ribosome"/>
    <property type="evidence" value="ECO:0007669"/>
    <property type="project" value="InterPro"/>
</dbReference>
<dbReference type="GO" id="GO:0006412">
    <property type="term" value="P:translation"/>
    <property type="evidence" value="ECO:0007669"/>
    <property type="project" value="UniProtKB-UniRule"/>
</dbReference>
<dbReference type="CDD" id="cd14867">
    <property type="entry name" value="uS7_Eukaryote"/>
    <property type="match status" value="1"/>
</dbReference>
<dbReference type="Gene3D" id="1.10.455.10">
    <property type="entry name" value="Ribosomal protein S7 domain"/>
    <property type="match status" value="1"/>
</dbReference>
<dbReference type="HAMAP" id="MF_00480_A">
    <property type="entry name" value="Ribosomal_uS7_A"/>
    <property type="match status" value="1"/>
</dbReference>
<dbReference type="InterPro" id="IPR000235">
    <property type="entry name" value="Ribosomal_uS7"/>
</dbReference>
<dbReference type="InterPro" id="IPR026018">
    <property type="entry name" value="Ribosomal_uS7_arc"/>
</dbReference>
<dbReference type="InterPro" id="IPR020606">
    <property type="entry name" value="Ribosomal_uS7_CS"/>
</dbReference>
<dbReference type="InterPro" id="IPR023798">
    <property type="entry name" value="Ribosomal_uS7_dom"/>
</dbReference>
<dbReference type="InterPro" id="IPR036823">
    <property type="entry name" value="Ribosomal_uS7_dom_sf"/>
</dbReference>
<dbReference type="InterPro" id="IPR005716">
    <property type="entry name" value="Ribosomal_uS7_euk/arc"/>
</dbReference>
<dbReference type="NCBIfam" id="NF003106">
    <property type="entry name" value="PRK04027.1"/>
    <property type="match status" value="1"/>
</dbReference>
<dbReference type="NCBIfam" id="TIGR01028">
    <property type="entry name" value="uS7_euk_arch"/>
    <property type="match status" value="1"/>
</dbReference>
<dbReference type="PANTHER" id="PTHR11205">
    <property type="entry name" value="RIBOSOMAL PROTEIN S7"/>
    <property type="match status" value="1"/>
</dbReference>
<dbReference type="Pfam" id="PF00177">
    <property type="entry name" value="Ribosomal_S7"/>
    <property type="match status" value="1"/>
</dbReference>
<dbReference type="PIRSF" id="PIRSF002122">
    <property type="entry name" value="RPS7p_RPS7a_RPS5e_RPS7o"/>
    <property type="match status" value="1"/>
</dbReference>
<dbReference type="SUPFAM" id="SSF47973">
    <property type="entry name" value="Ribosomal protein S7"/>
    <property type="match status" value="1"/>
</dbReference>
<dbReference type="PROSITE" id="PS00052">
    <property type="entry name" value="RIBOSOMAL_S7"/>
    <property type="match status" value="1"/>
</dbReference>
<comment type="function">
    <text evidence="1">One of the primary rRNA binding proteins, it binds directly to 16S rRNA where it nucleates assembly of the head domain of the 30S subunit. Is located at the subunit interface close to the decoding center.</text>
</comment>
<comment type="subunit">
    <text evidence="1">Part of the 30S ribosomal subunit.</text>
</comment>
<comment type="similarity">
    <text evidence="1">Belongs to the universal ribosomal protein uS7 family.</text>
</comment>
<evidence type="ECO:0000255" key="1">
    <source>
        <dbReference type="HAMAP-Rule" id="MF_00480"/>
    </source>
</evidence>
<evidence type="ECO:0000305" key="2"/>
<gene>
    <name evidence="1" type="primary">rps7</name>
    <name type="ordered locus">MmarC7_0613</name>
</gene>
<accession>A6VGV4</accession>